<evidence type="ECO:0000255" key="1">
    <source>
        <dbReference type="PROSITE-ProRule" id="PRU00146"/>
    </source>
</evidence>
<evidence type="ECO:0000256" key="2">
    <source>
        <dbReference type="SAM" id="MobiDB-lite"/>
    </source>
</evidence>
<evidence type="ECO:0000269" key="3">
    <source>
    </source>
</evidence>
<evidence type="ECO:0000269" key="4">
    <source>
    </source>
</evidence>
<evidence type="ECO:0000269" key="5">
    <source>
    </source>
</evidence>
<evidence type="ECO:0000305" key="6"/>
<sequence length="538" mass="60696">MPNSSYYDDDGGSFEAASYPFQFDGSRRFPNDLHPTMFEGEESNQNGGSVLIDQAFQDIQNPNVNSNMHLENQFQHFHEPNKESGAFGSYKNDDVAKEIESSKNQETDAKSEQAPFTEDASSSNYAHHRSADSQTKSALPPNVPASSSPLPPMSIAMNIARKRSWPASLAIERDNTADALFSTEDGREEQFNLEGVKTKSGRKVHRPNHFDPLVKLPTRRRGPGRRPVVALAMKCSVCQRLQSPPKNRIVFCDGCNTPFHQLCHEPYISDELLDSPNGEWFCDDCIRRKKQAPLVTGTTARELNLSSEEKKSYLLSLPISQLVDILLFCEQLHPDIPFYSPKTSTIVQELQSKRSAFTATMNEPVTGDQYLSLNNGTESQSKTTKHSTSLPSTEPVEVDKQYMESEKIPTIDEYLQEYSNEDEIVLQVLESFPAAVSFSTITNTIQAKYSNRKIKNSNITRSLNRLVRKNRVLRDARGSSYELNRTFDADRPSVRPDISITGPIPIDWMLYTPHTEDLTENFCTYYMFDETPIVLSSI</sequence>
<reference key="1">
    <citation type="journal article" date="2002" name="Nature">
        <title>The genome sequence of Schizosaccharomyces pombe.</title>
        <authorList>
            <person name="Wood V."/>
            <person name="Gwilliam R."/>
            <person name="Rajandream M.A."/>
            <person name="Lyne M.H."/>
            <person name="Lyne R."/>
            <person name="Stewart A."/>
            <person name="Sgouros J.G."/>
            <person name="Peat N."/>
            <person name="Hayles J."/>
            <person name="Baker S.G."/>
            <person name="Basham D."/>
            <person name="Bowman S."/>
            <person name="Brooks K."/>
            <person name="Brown D."/>
            <person name="Brown S."/>
            <person name="Chillingworth T."/>
            <person name="Churcher C.M."/>
            <person name="Collins M."/>
            <person name="Connor R."/>
            <person name="Cronin A."/>
            <person name="Davis P."/>
            <person name="Feltwell T."/>
            <person name="Fraser A."/>
            <person name="Gentles S."/>
            <person name="Goble A."/>
            <person name="Hamlin N."/>
            <person name="Harris D.E."/>
            <person name="Hidalgo J."/>
            <person name="Hodgson G."/>
            <person name="Holroyd S."/>
            <person name="Hornsby T."/>
            <person name="Howarth S."/>
            <person name="Huckle E.J."/>
            <person name="Hunt S."/>
            <person name="Jagels K."/>
            <person name="James K.D."/>
            <person name="Jones L."/>
            <person name="Jones M."/>
            <person name="Leather S."/>
            <person name="McDonald S."/>
            <person name="McLean J."/>
            <person name="Mooney P."/>
            <person name="Moule S."/>
            <person name="Mungall K.L."/>
            <person name="Murphy L.D."/>
            <person name="Niblett D."/>
            <person name="Odell C."/>
            <person name="Oliver K."/>
            <person name="O'Neil S."/>
            <person name="Pearson D."/>
            <person name="Quail M.A."/>
            <person name="Rabbinowitsch E."/>
            <person name="Rutherford K.M."/>
            <person name="Rutter S."/>
            <person name="Saunders D."/>
            <person name="Seeger K."/>
            <person name="Sharp S."/>
            <person name="Skelton J."/>
            <person name="Simmonds M.N."/>
            <person name="Squares R."/>
            <person name="Squares S."/>
            <person name="Stevens K."/>
            <person name="Taylor K."/>
            <person name="Taylor R.G."/>
            <person name="Tivey A."/>
            <person name="Walsh S.V."/>
            <person name="Warren T."/>
            <person name="Whitehead S."/>
            <person name="Woodward J.R."/>
            <person name="Volckaert G."/>
            <person name="Aert R."/>
            <person name="Robben J."/>
            <person name="Grymonprez B."/>
            <person name="Weltjens I."/>
            <person name="Vanstreels E."/>
            <person name="Rieger M."/>
            <person name="Schaefer M."/>
            <person name="Mueller-Auer S."/>
            <person name="Gabel C."/>
            <person name="Fuchs M."/>
            <person name="Duesterhoeft A."/>
            <person name="Fritzc C."/>
            <person name="Holzer E."/>
            <person name="Moestl D."/>
            <person name="Hilbert H."/>
            <person name="Borzym K."/>
            <person name="Langer I."/>
            <person name="Beck A."/>
            <person name="Lehrach H."/>
            <person name="Reinhardt R."/>
            <person name="Pohl T.M."/>
            <person name="Eger P."/>
            <person name="Zimmermann W."/>
            <person name="Wedler H."/>
            <person name="Wambutt R."/>
            <person name="Purnelle B."/>
            <person name="Goffeau A."/>
            <person name="Cadieu E."/>
            <person name="Dreano S."/>
            <person name="Gloux S."/>
            <person name="Lelaure V."/>
            <person name="Mottier S."/>
            <person name="Galibert F."/>
            <person name="Aves S.J."/>
            <person name="Xiang Z."/>
            <person name="Hunt C."/>
            <person name="Moore K."/>
            <person name="Hurst S.M."/>
            <person name="Lucas M."/>
            <person name="Rochet M."/>
            <person name="Gaillardin C."/>
            <person name="Tallada V.A."/>
            <person name="Garzon A."/>
            <person name="Thode G."/>
            <person name="Daga R.R."/>
            <person name="Cruzado L."/>
            <person name="Jimenez J."/>
            <person name="Sanchez M."/>
            <person name="del Rey F."/>
            <person name="Benito J."/>
            <person name="Dominguez A."/>
            <person name="Revuelta J.L."/>
            <person name="Moreno S."/>
            <person name="Armstrong J."/>
            <person name="Forsburg S.L."/>
            <person name="Cerutti L."/>
            <person name="Lowe T."/>
            <person name="McCombie W.R."/>
            <person name="Paulsen I."/>
            <person name="Potashkin J."/>
            <person name="Shpakovski G.V."/>
            <person name="Ussery D."/>
            <person name="Barrell B.G."/>
            <person name="Nurse P."/>
        </authorList>
    </citation>
    <scope>NUCLEOTIDE SEQUENCE [LARGE SCALE GENOMIC DNA]</scope>
    <source>
        <strain>972 / ATCC 24843</strain>
    </source>
</reference>
<reference key="2">
    <citation type="journal article" date="2006" name="J. Biol. Chem.">
        <title>Fission yeast homologs of human histone H3 lysine 4 demethylase regulate a common set of genes with diverse functions.</title>
        <authorList>
            <person name="Nicolas E."/>
            <person name="Lee M.G."/>
            <person name="Hakimi M.-A."/>
            <person name="Cam H.P."/>
            <person name="Grewal S.I.S."/>
            <person name="Shiekhattar R."/>
        </authorList>
    </citation>
    <scope>IDENTIFICATION IN THE SWM HISTONE DEMETHYLASE COMPLEX</scope>
</reference>
<reference key="3">
    <citation type="journal article" date="2007" name="Mol. Cell">
        <title>S. pombe LSD1 homologs regulate heterochromatin propagation and euchromatic gene transcription.</title>
        <authorList>
            <person name="Lan F."/>
            <person name="Zaratiegui M."/>
            <person name="Villen J."/>
            <person name="Vaughn M.W."/>
            <person name="Verdel A."/>
            <person name="Huarte M."/>
            <person name="Shi Y."/>
            <person name="Gygi S.P."/>
            <person name="Moazed D."/>
            <person name="Martienssen R.A."/>
            <person name="Shi Y."/>
        </authorList>
    </citation>
    <scope>IDENTIFICATION IN THE SWM HISTONE DEMETHYLASE COMPLEX</scope>
    <scope>FUNCTION OF THE SWM COMPLEX</scope>
</reference>
<reference key="4">
    <citation type="journal article" date="2007" name="PLoS ONE">
        <title>Genome-wide studies of histone demethylation catalysed by the fission yeast homologues of mammalian LSD1.</title>
        <authorList>
            <person name="Opel M."/>
            <person name="Lando D."/>
            <person name="Bonilla C."/>
            <person name="Trewick S.C."/>
            <person name="Boukaba A."/>
            <person name="Walfridsson J."/>
            <person name="Cauwood J."/>
            <person name="Werler P.J."/>
            <person name="Carr A.M."/>
            <person name="Kouzarides T."/>
            <person name="Murzina N.V."/>
            <person name="Allshire R.C."/>
            <person name="Ekwall K."/>
            <person name="Laue E.D."/>
        </authorList>
    </citation>
    <scope>IDENTIFICATION IN THE SWM HISTONE DEMETHYLASE COMPLEX</scope>
    <scope>FUNCTION OF THE SWM COMPLEX</scope>
</reference>
<accession>Q09908</accession>
<feature type="chain" id="PRO_0000116437" description="SWM histone demethylase complex subunit phf2">
    <location>
        <begin position="1"/>
        <end position="538"/>
    </location>
</feature>
<feature type="zinc finger region" description="PHD-type" evidence="1">
    <location>
        <begin position="232"/>
        <end position="288"/>
    </location>
</feature>
<feature type="region of interest" description="Disordered" evidence="2">
    <location>
        <begin position="28"/>
        <end position="47"/>
    </location>
</feature>
<feature type="region of interest" description="Disordered" evidence="2">
    <location>
        <begin position="98"/>
        <end position="150"/>
    </location>
</feature>
<feature type="region of interest" description="Disordered" evidence="2">
    <location>
        <begin position="198"/>
        <end position="222"/>
    </location>
</feature>
<feature type="region of interest" description="Disordered" evidence="2">
    <location>
        <begin position="367"/>
        <end position="396"/>
    </location>
</feature>
<feature type="compositionally biased region" description="Basic and acidic residues" evidence="2">
    <location>
        <begin position="98"/>
        <end position="111"/>
    </location>
</feature>
<feature type="compositionally biased region" description="Polar residues" evidence="2">
    <location>
        <begin position="367"/>
        <end position="392"/>
    </location>
</feature>
<organism>
    <name type="scientific">Schizosaccharomyces pombe (strain 972 / ATCC 24843)</name>
    <name type="common">Fission yeast</name>
    <dbReference type="NCBI Taxonomy" id="284812"/>
    <lineage>
        <taxon>Eukaryota</taxon>
        <taxon>Fungi</taxon>
        <taxon>Dikarya</taxon>
        <taxon>Ascomycota</taxon>
        <taxon>Taphrinomycotina</taxon>
        <taxon>Schizosaccharomycetes</taxon>
        <taxon>Schizosaccharomycetales</taxon>
        <taxon>Schizosaccharomycetaceae</taxon>
        <taxon>Schizosaccharomyces</taxon>
    </lineage>
</organism>
<proteinExistence type="evidence at protein level"/>
<keyword id="KW-0156">Chromatin regulator</keyword>
<keyword id="KW-0479">Metal-binding</keyword>
<keyword id="KW-0539">Nucleus</keyword>
<keyword id="KW-1185">Reference proteome</keyword>
<keyword id="KW-0804">Transcription</keyword>
<keyword id="KW-0805">Transcription regulation</keyword>
<keyword id="KW-0862">Zinc</keyword>
<keyword id="KW-0863">Zinc-finger</keyword>
<comment type="function">
    <text evidence="4 5">Component of the SWM histone demethylase complex that specifically demethylates H3K9me2, a specific tag for epigenetic transcriptional activation, thereby acting as a corepressor. Has a role in regulating heterochromatin propagation and euchromatic transcription.</text>
</comment>
<comment type="subunit">
    <text evidence="3 4 5">Component of the SWM histone demethylase complex composed of at least lsd1, lsd2, phf1 and phf2.</text>
</comment>
<comment type="subcellular location">
    <subcellularLocation>
        <location evidence="6">Nucleus</location>
    </subcellularLocation>
</comment>
<protein>
    <recommendedName>
        <fullName>SWM histone demethylase complex subunit phf2</fullName>
    </recommendedName>
    <alternativeName>
        <fullName>PHD finger domain-containing protein phf2</fullName>
    </alternativeName>
</protein>
<gene>
    <name type="primary">phf2</name>
    <name type="synonym">saf60</name>
    <name type="synonym">swp2</name>
    <name type="ORF">SPAC30D11.08c</name>
</gene>
<dbReference type="EMBL" id="CU329670">
    <property type="protein sequence ID" value="CAA91894.1"/>
    <property type="molecule type" value="Genomic_DNA"/>
</dbReference>
<dbReference type="PIR" id="T38591">
    <property type="entry name" value="S62566"/>
</dbReference>
<dbReference type="RefSeq" id="NP_593209.1">
    <property type="nucleotide sequence ID" value="NM_001018605.2"/>
</dbReference>
<dbReference type="SMR" id="Q09908"/>
<dbReference type="BioGRID" id="278708">
    <property type="interactions" value="14"/>
</dbReference>
<dbReference type="ComplexPortal" id="CPX-10327">
    <property type="entry name" value="SWM histone demethylase complex"/>
</dbReference>
<dbReference type="FunCoup" id="Q09908">
    <property type="interactions" value="278"/>
</dbReference>
<dbReference type="STRING" id="284812.Q09908"/>
<dbReference type="iPTMnet" id="Q09908"/>
<dbReference type="PaxDb" id="4896-SPAC30D11.08c.1"/>
<dbReference type="EnsemblFungi" id="SPAC30D11.08c.1">
    <property type="protein sequence ID" value="SPAC30D11.08c.1:pep"/>
    <property type="gene ID" value="SPAC30D11.08c"/>
</dbReference>
<dbReference type="GeneID" id="2542236"/>
<dbReference type="KEGG" id="spo:2542236"/>
<dbReference type="PomBase" id="SPAC30D11.08c">
    <property type="gene designation" value="phf2"/>
</dbReference>
<dbReference type="VEuPathDB" id="FungiDB:SPAC30D11.08c"/>
<dbReference type="eggNOG" id="KOG4323">
    <property type="taxonomic scope" value="Eukaryota"/>
</dbReference>
<dbReference type="HOGENOM" id="CLU_506376_0_0_1"/>
<dbReference type="InParanoid" id="Q09908"/>
<dbReference type="OMA" id="FHQLCHE"/>
<dbReference type="PRO" id="PR:Q09908"/>
<dbReference type="Proteomes" id="UP000002485">
    <property type="component" value="Chromosome I"/>
</dbReference>
<dbReference type="GO" id="GO:0000785">
    <property type="term" value="C:chromatin"/>
    <property type="evidence" value="ECO:0000353"/>
    <property type="project" value="PomBase"/>
</dbReference>
<dbReference type="GO" id="GO:0033193">
    <property type="term" value="C:Lsd1/2 complex"/>
    <property type="evidence" value="ECO:0000314"/>
    <property type="project" value="PomBase"/>
</dbReference>
<dbReference type="GO" id="GO:0031934">
    <property type="term" value="C:mating-type region heterochromatin"/>
    <property type="evidence" value="ECO:0000353"/>
    <property type="project" value="PomBase"/>
</dbReference>
<dbReference type="GO" id="GO:0005634">
    <property type="term" value="C:nucleus"/>
    <property type="evidence" value="ECO:0007005"/>
    <property type="project" value="PomBase"/>
</dbReference>
<dbReference type="GO" id="GO:0005721">
    <property type="term" value="C:pericentric heterochromatin"/>
    <property type="evidence" value="ECO:0000353"/>
    <property type="project" value="PomBase"/>
</dbReference>
<dbReference type="GO" id="GO:0140720">
    <property type="term" value="C:subtelomeric heterochromatin"/>
    <property type="evidence" value="ECO:0000353"/>
    <property type="project" value="PomBase"/>
</dbReference>
<dbReference type="GO" id="GO:0003682">
    <property type="term" value="F:chromatin binding"/>
    <property type="evidence" value="ECO:0000318"/>
    <property type="project" value="GO_Central"/>
</dbReference>
<dbReference type="GO" id="GO:0003677">
    <property type="term" value="F:DNA binding"/>
    <property type="evidence" value="ECO:0000318"/>
    <property type="project" value="GO_Central"/>
</dbReference>
<dbReference type="GO" id="GO:0008270">
    <property type="term" value="F:zinc ion binding"/>
    <property type="evidence" value="ECO:0007669"/>
    <property type="project" value="UniProtKB-KW"/>
</dbReference>
<dbReference type="GO" id="GO:0006338">
    <property type="term" value="P:chromatin remodeling"/>
    <property type="evidence" value="ECO:0000353"/>
    <property type="project" value="PomBase"/>
</dbReference>
<dbReference type="GO" id="GO:0033696">
    <property type="term" value="P:heterochromatin boundary formation"/>
    <property type="evidence" value="ECO:0000353"/>
    <property type="project" value="PomBase"/>
</dbReference>
<dbReference type="GO" id="GO:0045814">
    <property type="term" value="P:negative regulation of gene expression, epigenetic"/>
    <property type="evidence" value="ECO:0000318"/>
    <property type="project" value="GO_Central"/>
</dbReference>
<dbReference type="GO" id="GO:0045893">
    <property type="term" value="P:positive regulation of DNA-templated transcription"/>
    <property type="evidence" value="ECO:0007669"/>
    <property type="project" value="GOC"/>
</dbReference>
<dbReference type="CDD" id="cd15502">
    <property type="entry name" value="PHD_Phf1p_Phf2p_like"/>
    <property type="match status" value="1"/>
</dbReference>
<dbReference type="FunFam" id="3.30.40.10:FF:000101">
    <property type="entry name" value="Integrator complex subunit 12"/>
    <property type="match status" value="1"/>
</dbReference>
<dbReference type="Gene3D" id="3.30.40.10">
    <property type="entry name" value="Zinc/RING finger domain, C3HC4 (zinc finger)"/>
    <property type="match status" value="1"/>
</dbReference>
<dbReference type="InterPro" id="IPR019786">
    <property type="entry name" value="Zinc_finger_PHD-type_CS"/>
</dbReference>
<dbReference type="InterPro" id="IPR011011">
    <property type="entry name" value="Znf_FYVE_PHD"/>
</dbReference>
<dbReference type="InterPro" id="IPR001965">
    <property type="entry name" value="Znf_PHD"/>
</dbReference>
<dbReference type="InterPro" id="IPR019787">
    <property type="entry name" value="Znf_PHD-finger"/>
</dbReference>
<dbReference type="InterPro" id="IPR013083">
    <property type="entry name" value="Znf_RING/FYVE/PHD"/>
</dbReference>
<dbReference type="PANTHER" id="PTHR12628:SF10">
    <property type="entry name" value="HOMEOBOX DOMAIN-CONTAINING PROTEIN"/>
    <property type="match status" value="1"/>
</dbReference>
<dbReference type="PANTHER" id="PTHR12628">
    <property type="entry name" value="POLYCOMB-LIKE TRANSCRIPTION FACTOR"/>
    <property type="match status" value="1"/>
</dbReference>
<dbReference type="Pfam" id="PF00628">
    <property type="entry name" value="PHD"/>
    <property type="match status" value="1"/>
</dbReference>
<dbReference type="SMART" id="SM00249">
    <property type="entry name" value="PHD"/>
    <property type="match status" value="1"/>
</dbReference>
<dbReference type="SUPFAM" id="SSF57903">
    <property type="entry name" value="FYVE/PHD zinc finger"/>
    <property type="match status" value="1"/>
</dbReference>
<dbReference type="PROSITE" id="PS01359">
    <property type="entry name" value="ZF_PHD_1"/>
    <property type="match status" value="1"/>
</dbReference>
<dbReference type="PROSITE" id="PS50016">
    <property type="entry name" value="ZF_PHD_2"/>
    <property type="match status" value="1"/>
</dbReference>
<name>PHF2_SCHPO</name>